<evidence type="ECO:0000250" key="1">
    <source>
        <dbReference type="UniProtKB" id="P0AF18"/>
    </source>
</evidence>
<evidence type="ECO:0000250" key="2">
    <source>
        <dbReference type="UniProtKB" id="Q9Y303"/>
    </source>
</evidence>
<evidence type="ECO:0000305" key="3"/>
<protein>
    <recommendedName>
        <fullName evidence="2">N-acetylglucosamine-6-phosphate deacetylase</fullName>
        <shortName evidence="2">GlcNAc 6-P deacetylase</shortName>
        <ecNumber evidence="2">3.5.1.25</ecNumber>
    </recommendedName>
</protein>
<organism>
    <name type="scientific">Caenorhabditis elegans</name>
    <dbReference type="NCBI Taxonomy" id="6239"/>
    <lineage>
        <taxon>Eukaryota</taxon>
        <taxon>Metazoa</taxon>
        <taxon>Ecdysozoa</taxon>
        <taxon>Nematoda</taxon>
        <taxon>Chromadorea</taxon>
        <taxon>Rhabditida</taxon>
        <taxon>Rhabditina</taxon>
        <taxon>Rhabditomorpha</taxon>
        <taxon>Rhabditoidea</taxon>
        <taxon>Rhabditidae</taxon>
        <taxon>Peloderinae</taxon>
        <taxon>Caenorhabditis</taxon>
    </lineage>
</organism>
<comment type="catalytic activity">
    <reaction evidence="2">
        <text>N-acetyl-D-glucosamine 6-phosphate + H2O = D-glucosamine 6-phosphate + acetate</text>
        <dbReference type="Rhea" id="RHEA:22936"/>
        <dbReference type="ChEBI" id="CHEBI:15377"/>
        <dbReference type="ChEBI" id="CHEBI:30089"/>
        <dbReference type="ChEBI" id="CHEBI:57513"/>
        <dbReference type="ChEBI" id="CHEBI:58725"/>
        <dbReference type="EC" id="3.5.1.25"/>
    </reaction>
</comment>
<comment type="cofactor">
    <cofactor evidence="1">
        <name>a divalent metal cation</name>
        <dbReference type="ChEBI" id="CHEBI:60240"/>
    </cofactor>
    <text evidence="1">Binds 1 divalent metal cation per subunit.</text>
</comment>
<comment type="similarity">
    <text evidence="3">Belongs to the metallo-dependent hydrolases superfamily. NagA family.</text>
</comment>
<feature type="chain" id="PRO_0000170912" description="N-acetylglucosamine-6-phosphate deacetylase">
    <location>
        <begin position="1"/>
        <end position="418"/>
    </location>
</feature>
<feature type="active site" description="Proton donor/acceptor" evidence="1">
    <location>
        <position position="306"/>
    </location>
</feature>
<feature type="binding site" evidence="1">
    <location>
        <position position="154"/>
    </location>
    <ligand>
        <name>a divalent metal cation</name>
        <dbReference type="ChEBI" id="CHEBI:60240"/>
    </ligand>
</feature>
<feature type="binding site" evidence="1">
    <location>
        <begin position="165"/>
        <end position="166"/>
    </location>
    <ligand>
        <name>substrate</name>
    </ligand>
</feature>
<feature type="binding site" evidence="1">
    <location>
        <position position="223"/>
    </location>
    <ligand>
        <name>a divalent metal cation</name>
        <dbReference type="ChEBI" id="CHEBI:60240"/>
    </ligand>
</feature>
<feature type="binding site" evidence="1">
    <location>
        <position position="244"/>
    </location>
    <ligand>
        <name>a divalent metal cation</name>
        <dbReference type="ChEBI" id="CHEBI:60240"/>
    </ligand>
</feature>
<feature type="binding site" evidence="1">
    <location>
        <begin position="247"/>
        <end position="248"/>
    </location>
    <ligand>
        <name>substrate</name>
    </ligand>
</feature>
<feature type="binding site" evidence="1">
    <location>
        <position position="255"/>
    </location>
    <ligand>
        <name>substrate</name>
    </ligand>
</feature>
<feature type="binding site" evidence="1">
    <location>
        <begin position="281"/>
        <end position="284"/>
    </location>
    <ligand>
        <name>substrate</name>
    </ligand>
</feature>
<feature type="binding site" evidence="1">
    <location>
        <begin position="340"/>
        <end position="342"/>
    </location>
    <ligand>
        <name>substrate</name>
    </ligand>
</feature>
<accession>P34480</accession>
<dbReference type="EC" id="3.5.1.25" evidence="2"/>
<dbReference type="EMBL" id="Z11505">
    <property type="protein sequence ID" value="CAA77585.1"/>
    <property type="molecule type" value="Genomic_DNA"/>
</dbReference>
<dbReference type="PIR" id="S31124">
    <property type="entry name" value="S31124"/>
</dbReference>
<dbReference type="RefSeq" id="NP_001366671.1">
    <property type="nucleotide sequence ID" value="NM_001379854.2"/>
</dbReference>
<dbReference type="RefSeq" id="NP_498990.1">
    <property type="nucleotide sequence ID" value="NM_066589.5"/>
</dbReference>
<dbReference type="SMR" id="P34480"/>
<dbReference type="BioGRID" id="41471">
    <property type="interactions" value="3"/>
</dbReference>
<dbReference type="DIP" id="DIP-24730N"/>
<dbReference type="FunCoup" id="P34480">
    <property type="interactions" value="795"/>
</dbReference>
<dbReference type="IntAct" id="P34480">
    <property type="interactions" value="1"/>
</dbReference>
<dbReference type="STRING" id="6239.F59B2.3.3"/>
<dbReference type="PaxDb" id="6239-F59B2.3.2"/>
<dbReference type="PeptideAtlas" id="P34480"/>
<dbReference type="EnsemblMetazoa" id="F59B2.3.1">
    <property type="protein sequence ID" value="F59B2.3.1"/>
    <property type="gene ID" value="WBGene00010308"/>
</dbReference>
<dbReference type="GeneID" id="176272"/>
<dbReference type="UCSC" id="F59B2.3.2">
    <property type="organism name" value="c. elegans"/>
</dbReference>
<dbReference type="AGR" id="WB:WBGene00010308"/>
<dbReference type="WormBase" id="F59B2.3">
    <property type="protein sequence ID" value="CE00231"/>
    <property type="gene ID" value="WBGene00010308"/>
</dbReference>
<dbReference type="eggNOG" id="KOG3892">
    <property type="taxonomic scope" value="Eukaryota"/>
</dbReference>
<dbReference type="GeneTree" id="ENSGT00390000012605"/>
<dbReference type="HOGENOM" id="CLU_032482_0_2_1"/>
<dbReference type="InParanoid" id="P34480"/>
<dbReference type="OMA" id="PCRKGAH"/>
<dbReference type="OrthoDB" id="10264777at2759"/>
<dbReference type="PhylomeDB" id="P34480"/>
<dbReference type="Reactome" id="R-CEL-446210">
    <property type="pathway name" value="Synthesis of UDP-N-acetyl-glucosamine"/>
</dbReference>
<dbReference type="PRO" id="PR:P34480"/>
<dbReference type="Proteomes" id="UP000001940">
    <property type="component" value="Chromosome III"/>
</dbReference>
<dbReference type="Bgee" id="WBGene00010308">
    <property type="expression patterns" value="Expressed in germ line (C elegans) and 4 other cell types or tissues"/>
</dbReference>
<dbReference type="GO" id="GO:0046872">
    <property type="term" value="F:metal ion binding"/>
    <property type="evidence" value="ECO:0007669"/>
    <property type="project" value="UniProtKB-KW"/>
</dbReference>
<dbReference type="GO" id="GO:0008448">
    <property type="term" value="F:N-acetylglucosamine-6-phosphate deacetylase activity"/>
    <property type="evidence" value="ECO:0000318"/>
    <property type="project" value="GO_Central"/>
</dbReference>
<dbReference type="GO" id="GO:0006046">
    <property type="term" value="P:N-acetylglucosamine catabolic process"/>
    <property type="evidence" value="ECO:0000318"/>
    <property type="project" value="GO_Central"/>
</dbReference>
<dbReference type="CDD" id="cd00854">
    <property type="entry name" value="NagA"/>
    <property type="match status" value="1"/>
</dbReference>
<dbReference type="FunFam" id="3.20.20.140:FF:000023">
    <property type="entry name" value="N-acetylglucosamine-6-phosphate deacetylase"/>
    <property type="match status" value="1"/>
</dbReference>
<dbReference type="Gene3D" id="3.20.20.140">
    <property type="entry name" value="Metal-dependent hydrolases"/>
    <property type="match status" value="1"/>
</dbReference>
<dbReference type="Gene3D" id="2.30.40.10">
    <property type="entry name" value="Urease, subunit C, domain 1"/>
    <property type="match status" value="1"/>
</dbReference>
<dbReference type="InterPro" id="IPR006680">
    <property type="entry name" value="Amidohydro-rel"/>
</dbReference>
<dbReference type="InterPro" id="IPR003764">
    <property type="entry name" value="GlcNAc_6-P_deAcase"/>
</dbReference>
<dbReference type="InterPro" id="IPR011059">
    <property type="entry name" value="Metal-dep_hydrolase_composite"/>
</dbReference>
<dbReference type="InterPro" id="IPR032466">
    <property type="entry name" value="Metal_Hydrolase"/>
</dbReference>
<dbReference type="NCBIfam" id="TIGR00221">
    <property type="entry name" value="nagA"/>
    <property type="match status" value="1"/>
</dbReference>
<dbReference type="PANTHER" id="PTHR11113">
    <property type="entry name" value="N-ACETYLGLUCOSAMINE-6-PHOSPHATE DEACETYLASE"/>
    <property type="match status" value="1"/>
</dbReference>
<dbReference type="PANTHER" id="PTHR11113:SF14">
    <property type="entry name" value="N-ACETYLGLUCOSAMINE-6-PHOSPHATE DEACETYLASE"/>
    <property type="match status" value="1"/>
</dbReference>
<dbReference type="Pfam" id="PF01979">
    <property type="entry name" value="Amidohydro_1"/>
    <property type="match status" value="1"/>
</dbReference>
<dbReference type="PIRSF" id="PIRSF038994">
    <property type="entry name" value="NagA"/>
    <property type="match status" value="1"/>
</dbReference>
<dbReference type="SUPFAM" id="SSF51338">
    <property type="entry name" value="Composite domain of metallo-dependent hydrolases"/>
    <property type="match status" value="1"/>
</dbReference>
<dbReference type="SUPFAM" id="SSF51556">
    <property type="entry name" value="Metallo-dependent hydrolases"/>
    <property type="match status" value="1"/>
</dbReference>
<reference key="1">
    <citation type="journal article" date="1994" name="Nature">
        <title>2.2 Mb of contiguous nucleotide sequence from chromosome III of C. elegans.</title>
        <authorList>
            <person name="Wilson R."/>
            <person name="Ainscough R."/>
            <person name="Anderson K."/>
            <person name="Baynes C."/>
            <person name="Berks M."/>
            <person name="Bonfield J."/>
            <person name="Burton J."/>
            <person name="Connell M."/>
            <person name="Copsey T."/>
            <person name="Cooper J."/>
            <person name="Coulson A."/>
            <person name="Craxton M."/>
            <person name="Dear S."/>
            <person name="Du Z."/>
            <person name="Durbin R."/>
            <person name="Favello A."/>
            <person name="Fraser A."/>
            <person name="Fulton L."/>
            <person name="Gardner A."/>
            <person name="Green P."/>
            <person name="Hawkins T."/>
            <person name="Hillier L."/>
            <person name="Jier M."/>
            <person name="Johnston L."/>
            <person name="Jones M."/>
            <person name="Kershaw J."/>
            <person name="Kirsten J."/>
            <person name="Laisster N."/>
            <person name="Latreille P."/>
            <person name="Lightning J."/>
            <person name="Lloyd C."/>
            <person name="Mortimore B."/>
            <person name="O'Callaghan M."/>
            <person name="Parsons J."/>
            <person name="Percy C."/>
            <person name="Rifken L."/>
            <person name="Roopra A."/>
            <person name="Saunders D."/>
            <person name="Shownkeen R."/>
            <person name="Sims M."/>
            <person name="Smaldon N."/>
            <person name="Smith A."/>
            <person name="Smith M."/>
            <person name="Sonnhammer E."/>
            <person name="Staden R."/>
            <person name="Sulston J."/>
            <person name="Thierry-Mieg J."/>
            <person name="Thomas K."/>
            <person name="Vaudin M."/>
            <person name="Vaughan K."/>
            <person name="Waterston R."/>
            <person name="Watson A."/>
            <person name="Weinstock L."/>
            <person name="Wilkinson-Sproat J."/>
            <person name="Wohldman P."/>
        </authorList>
    </citation>
    <scope>NUCLEOTIDE SEQUENCE [LARGE SCALE GENOMIC DNA]</scope>
    <source>
        <strain>Bristol N2</strain>
    </source>
</reference>
<reference key="2">
    <citation type="journal article" date="1998" name="Science">
        <title>Genome sequence of the nematode C. elegans: a platform for investigating biology.</title>
        <authorList>
            <consortium name="The C. elegans sequencing consortium"/>
        </authorList>
    </citation>
    <scope>NUCLEOTIDE SEQUENCE [LARGE SCALE GENOMIC DNA]</scope>
    <source>
        <strain>Bristol N2</strain>
    </source>
</reference>
<proteinExistence type="inferred from homology"/>
<sequence>MLPRKLKIDSTELAEITNELVQFLNCLVLRSGGLKKEHIWVRNGRILDERTVFFEEKTMADVQIDCEGLILSPGFIDLQLNGGFGIDFSTYNSDDKEYQEGLALVAKQLLAHGVTSFSPTVITSSPETYHKILPLLKPSNASSEGAGNLGAHLEGPFISADKRGCHPEQLVITSLSPNPVEIIEHVYGSTENIAIVTMAPELEGAQEAIEYFVSTGTTVSVGHSSAKLGPGEMAVLSGAKMITHLFNAMQSYHHRDPGLIGLLTSSKLTPDHPLYYGIISDGIHTHDSALRIAYHTNSAGLVLVTDAIAALGMSDGVHKLGTQTIHVKGLEAKLDGTNTTAGSVASMPYCIRHLMKATGCPIEFALQSATHKPATLLGVSDEKGTLDVGRLADFVLIDKNVTVKATFCSGKRVFLAQD</sequence>
<name>NAGA_CAEEL</name>
<gene>
    <name type="ORF">F59B2.3</name>
</gene>
<keyword id="KW-0119">Carbohydrate metabolism</keyword>
<keyword id="KW-0378">Hydrolase</keyword>
<keyword id="KW-0479">Metal-binding</keyword>
<keyword id="KW-1185">Reference proteome</keyword>